<name>CYSI_CHRSD</name>
<organism>
    <name type="scientific">Chromohalobacter salexigens (strain ATCC BAA-138 / DSM 3043 / CIP 106854 / NCIMB 13768 / 1H11)</name>
    <dbReference type="NCBI Taxonomy" id="290398"/>
    <lineage>
        <taxon>Bacteria</taxon>
        <taxon>Pseudomonadati</taxon>
        <taxon>Pseudomonadota</taxon>
        <taxon>Gammaproteobacteria</taxon>
        <taxon>Oceanospirillales</taxon>
        <taxon>Halomonadaceae</taxon>
        <taxon>Chromohalobacter</taxon>
    </lineage>
</organism>
<sequence>MDIIAKLRDVSFDELHPNERLKVDSHYLYGTLEESLADRATGAVSDADTQLTKFHGFYQQDDRDLRDDRRHRKLEPLYSFMVRLRLPGGRVSPEQWLTLDDNARRYANGTLRITTRQTFQYHGVFKENLRGHLQALDKAMMDTIAACGDVNRNVICTANPHRSPIHRQVHDLAHEISAHLLPRTRAYHEIFLGEERVAGGPREAEDEVEPLYTRHYLPRKFKVALAIPPENDVDVFAHDVGFIADVQAGELKGFNVCIGGGMGMTHGEPATFPRLSDIVGYCTPDRVVAVAEAIMLVQRDNGNRHDRKQARLKYTVEALGVDGFRQEVEARLGEALSPARELTLTHNGDRLGWYQGEDGLWHYGLFVQNGRLADSDGGPQLMTGMREIAQAHDGDIVLTTNQNLIITQVPEARREVIDDLLDRYRMTVEATPLRRHAMACVAFPTCGLAMAESERYLPSLIDRLDAIMREAGLADDAIIVRMTGCPNGCARPYLAEIGFVGKTIGRYNLYLGGGFAGERLNKLYRENIDEATILEELTPLIRRYAVEREPGEAFGDFVVRTGIIAPTLAGREFHA</sequence>
<feature type="chain" id="PRO_0000388481" description="Sulfite reductase [NADPH] hemoprotein beta-component">
    <location>
        <begin position="1"/>
        <end position="575"/>
    </location>
</feature>
<feature type="binding site" evidence="1">
    <location>
        <position position="440"/>
    </location>
    <ligand>
        <name>[4Fe-4S] cluster</name>
        <dbReference type="ChEBI" id="CHEBI:49883"/>
    </ligand>
</feature>
<feature type="binding site" evidence="1">
    <location>
        <position position="446"/>
    </location>
    <ligand>
        <name>[4Fe-4S] cluster</name>
        <dbReference type="ChEBI" id="CHEBI:49883"/>
    </ligand>
</feature>
<feature type="binding site" evidence="1">
    <location>
        <position position="485"/>
    </location>
    <ligand>
        <name>[4Fe-4S] cluster</name>
        <dbReference type="ChEBI" id="CHEBI:49883"/>
    </ligand>
</feature>
<feature type="binding site" evidence="1">
    <location>
        <position position="489"/>
    </location>
    <ligand>
        <name>[4Fe-4S] cluster</name>
        <dbReference type="ChEBI" id="CHEBI:49883"/>
    </ligand>
</feature>
<feature type="binding site" description="axial binding residue" evidence="1">
    <location>
        <position position="489"/>
    </location>
    <ligand>
        <name>siroheme</name>
        <dbReference type="ChEBI" id="CHEBI:60052"/>
    </ligand>
    <ligandPart>
        <name>Fe</name>
        <dbReference type="ChEBI" id="CHEBI:18248"/>
    </ligandPart>
</feature>
<keyword id="KW-0004">4Fe-4S</keyword>
<keyword id="KW-0028">Amino-acid biosynthesis</keyword>
<keyword id="KW-0198">Cysteine biosynthesis</keyword>
<keyword id="KW-0349">Heme</keyword>
<keyword id="KW-0408">Iron</keyword>
<keyword id="KW-0411">Iron-sulfur</keyword>
<keyword id="KW-0479">Metal-binding</keyword>
<keyword id="KW-0521">NADP</keyword>
<keyword id="KW-0560">Oxidoreductase</keyword>
<keyword id="KW-1185">Reference proteome</keyword>
<evidence type="ECO:0000255" key="1">
    <source>
        <dbReference type="HAMAP-Rule" id="MF_01540"/>
    </source>
</evidence>
<gene>
    <name evidence="1" type="primary">cysI</name>
    <name type="ordered locus">Csal_2695</name>
</gene>
<comment type="function">
    <text evidence="1">Component of the sulfite reductase complex that catalyzes the 6-electron reduction of sulfite to sulfide. This is one of several activities required for the biosynthesis of L-cysteine from sulfate.</text>
</comment>
<comment type="catalytic activity">
    <reaction evidence="1">
        <text>hydrogen sulfide + 3 NADP(+) + 3 H2O = sulfite + 3 NADPH + 4 H(+)</text>
        <dbReference type="Rhea" id="RHEA:13801"/>
        <dbReference type="ChEBI" id="CHEBI:15377"/>
        <dbReference type="ChEBI" id="CHEBI:15378"/>
        <dbReference type="ChEBI" id="CHEBI:17359"/>
        <dbReference type="ChEBI" id="CHEBI:29919"/>
        <dbReference type="ChEBI" id="CHEBI:57783"/>
        <dbReference type="ChEBI" id="CHEBI:58349"/>
        <dbReference type="EC" id="1.8.1.2"/>
    </reaction>
</comment>
<comment type="cofactor">
    <cofactor evidence="1">
        <name>siroheme</name>
        <dbReference type="ChEBI" id="CHEBI:60052"/>
    </cofactor>
    <text evidence="1">Binds 1 siroheme per subunit.</text>
</comment>
<comment type="cofactor">
    <cofactor evidence="1">
        <name>[4Fe-4S] cluster</name>
        <dbReference type="ChEBI" id="CHEBI:49883"/>
    </cofactor>
    <text evidence="1">Binds 1 [4Fe-4S] cluster per subunit.</text>
</comment>
<comment type="pathway">
    <text evidence="1">Sulfur metabolism; hydrogen sulfide biosynthesis; hydrogen sulfide from sulfite (NADPH route): step 1/1.</text>
</comment>
<comment type="subunit">
    <text evidence="1">Alpha(8)-beta(8). The alpha component is a flavoprotein, the beta component is a hemoprotein.</text>
</comment>
<comment type="similarity">
    <text evidence="1">Belongs to the nitrite and sulfite reductase 4Fe-4S domain family.</text>
</comment>
<dbReference type="EC" id="1.8.1.2" evidence="1"/>
<dbReference type="EMBL" id="CP000285">
    <property type="protein sequence ID" value="ABE60042.1"/>
    <property type="molecule type" value="Genomic_DNA"/>
</dbReference>
<dbReference type="RefSeq" id="WP_011507988.1">
    <property type="nucleotide sequence ID" value="NC_007963.1"/>
</dbReference>
<dbReference type="SMR" id="Q1QU16"/>
<dbReference type="STRING" id="290398.Csal_2695"/>
<dbReference type="GeneID" id="95335392"/>
<dbReference type="KEGG" id="csa:Csal_2695"/>
<dbReference type="eggNOG" id="COG0155">
    <property type="taxonomic scope" value="Bacteria"/>
</dbReference>
<dbReference type="HOGENOM" id="CLU_001975_3_2_6"/>
<dbReference type="OrthoDB" id="3189055at2"/>
<dbReference type="UniPathway" id="UPA00140">
    <property type="reaction ID" value="UER00207"/>
</dbReference>
<dbReference type="Proteomes" id="UP000000239">
    <property type="component" value="Chromosome"/>
</dbReference>
<dbReference type="GO" id="GO:0009337">
    <property type="term" value="C:sulfite reductase complex (NADPH)"/>
    <property type="evidence" value="ECO:0007669"/>
    <property type="project" value="InterPro"/>
</dbReference>
<dbReference type="GO" id="GO:0051539">
    <property type="term" value="F:4 iron, 4 sulfur cluster binding"/>
    <property type="evidence" value="ECO:0007669"/>
    <property type="project" value="UniProtKB-KW"/>
</dbReference>
<dbReference type="GO" id="GO:0020037">
    <property type="term" value="F:heme binding"/>
    <property type="evidence" value="ECO:0007669"/>
    <property type="project" value="InterPro"/>
</dbReference>
<dbReference type="GO" id="GO:0046872">
    <property type="term" value="F:metal ion binding"/>
    <property type="evidence" value="ECO:0007669"/>
    <property type="project" value="UniProtKB-KW"/>
</dbReference>
<dbReference type="GO" id="GO:0050661">
    <property type="term" value="F:NADP binding"/>
    <property type="evidence" value="ECO:0007669"/>
    <property type="project" value="InterPro"/>
</dbReference>
<dbReference type="GO" id="GO:0050311">
    <property type="term" value="F:sulfite reductase (ferredoxin) activity"/>
    <property type="evidence" value="ECO:0007669"/>
    <property type="project" value="TreeGrafter"/>
</dbReference>
<dbReference type="GO" id="GO:0004783">
    <property type="term" value="F:sulfite reductase (NADPH) activity"/>
    <property type="evidence" value="ECO:0007669"/>
    <property type="project" value="UniProtKB-UniRule"/>
</dbReference>
<dbReference type="GO" id="GO:0019344">
    <property type="term" value="P:cysteine biosynthetic process"/>
    <property type="evidence" value="ECO:0007669"/>
    <property type="project" value="UniProtKB-KW"/>
</dbReference>
<dbReference type="GO" id="GO:0070814">
    <property type="term" value="P:hydrogen sulfide biosynthetic process"/>
    <property type="evidence" value="ECO:0007669"/>
    <property type="project" value="UniProtKB-UniRule"/>
</dbReference>
<dbReference type="GO" id="GO:0000103">
    <property type="term" value="P:sulfate assimilation"/>
    <property type="evidence" value="ECO:0007669"/>
    <property type="project" value="UniProtKB-UniRule"/>
</dbReference>
<dbReference type="FunFam" id="3.30.413.10:FF:000003">
    <property type="entry name" value="Sulfite reductase [NADPH] hemoprotein beta-component"/>
    <property type="match status" value="1"/>
</dbReference>
<dbReference type="Gene3D" id="3.30.413.10">
    <property type="entry name" value="Sulfite Reductase Hemoprotein, domain 1"/>
    <property type="match status" value="2"/>
</dbReference>
<dbReference type="HAMAP" id="MF_01540">
    <property type="entry name" value="CysI"/>
    <property type="match status" value="1"/>
</dbReference>
<dbReference type="InterPro" id="IPR011786">
    <property type="entry name" value="CysI"/>
</dbReference>
<dbReference type="InterPro" id="IPR005117">
    <property type="entry name" value="NiRdtase/SiRdtase_haem-b_fer"/>
</dbReference>
<dbReference type="InterPro" id="IPR036136">
    <property type="entry name" value="Nit/Sulf_reduc_fer-like_dom_sf"/>
</dbReference>
<dbReference type="InterPro" id="IPR006067">
    <property type="entry name" value="NO2/SO3_Rdtase_4Fe4S_dom"/>
</dbReference>
<dbReference type="InterPro" id="IPR045169">
    <property type="entry name" value="NO2/SO3_Rdtase_4Fe4S_prot"/>
</dbReference>
<dbReference type="InterPro" id="IPR045854">
    <property type="entry name" value="NO2/SO3_Rdtase_4Fe4S_sf"/>
</dbReference>
<dbReference type="InterPro" id="IPR006066">
    <property type="entry name" value="NO2/SO3_Rdtase_FeS/sirohaem_BS"/>
</dbReference>
<dbReference type="NCBIfam" id="TIGR02041">
    <property type="entry name" value="CysI"/>
    <property type="match status" value="1"/>
</dbReference>
<dbReference type="NCBIfam" id="NF010029">
    <property type="entry name" value="PRK13504.1"/>
    <property type="match status" value="1"/>
</dbReference>
<dbReference type="PANTHER" id="PTHR11493:SF47">
    <property type="entry name" value="SULFITE REDUCTASE [NADPH] SUBUNIT BETA"/>
    <property type="match status" value="1"/>
</dbReference>
<dbReference type="PANTHER" id="PTHR11493">
    <property type="entry name" value="SULFITE REDUCTASE [NADPH] SUBUNIT BETA-RELATED"/>
    <property type="match status" value="1"/>
</dbReference>
<dbReference type="Pfam" id="PF01077">
    <property type="entry name" value="NIR_SIR"/>
    <property type="match status" value="1"/>
</dbReference>
<dbReference type="Pfam" id="PF03460">
    <property type="entry name" value="NIR_SIR_ferr"/>
    <property type="match status" value="2"/>
</dbReference>
<dbReference type="PRINTS" id="PR00397">
    <property type="entry name" value="SIROHAEM"/>
</dbReference>
<dbReference type="SUPFAM" id="SSF56014">
    <property type="entry name" value="Nitrite and sulphite reductase 4Fe-4S domain-like"/>
    <property type="match status" value="2"/>
</dbReference>
<dbReference type="SUPFAM" id="SSF55124">
    <property type="entry name" value="Nitrite/Sulfite reductase N-terminal domain-like"/>
    <property type="match status" value="2"/>
</dbReference>
<dbReference type="PROSITE" id="PS00365">
    <property type="entry name" value="NIR_SIR"/>
    <property type="match status" value="1"/>
</dbReference>
<accession>Q1QU16</accession>
<reference key="1">
    <citation type="journal article" date="2011" name="Stand. Genomic Sci.">
        <title>Complete genome sequence of the halophilic and highly halotolerant Chromohalobacter salexigens type strain (1H11(T)).</title>
        <authorList>
            <person name="Copeland A."/>
            <person name="O'Connor K."/>
            <person name="Lucas S."/>
            <person name="Lapidus A."/>
            <person name="Berry K.W."/>
            <person name="Detter J.C."/>
            <person name="Del Rio T.G."/>
            <person name="Hammon N."/>
            <person name="Dalin E."/>
            <person name="Tice H."/>
            <person name="Pitluck S."/>
            <person name="Bruce D."/>
            <person name="Goodwin L."/>
            <person name="Han C."/>
            <person name="Tapia R."/>
            <person name="Saunders E."/>
            <person name="Schmutz J."/>
            <person name="Brettin T."/>
            <person name="Larimer F."/>
            <person name="Land M."/>
            <person name="Hauser L."/>
            <person name="Vargas C."/>
            <person name="Nieto J.J."/>
            <person name="Kyrpides N.C."/>
            <person name="Ivanova N."/>
            <person name="Goker M."/>
            <person name="Klenk H.P."/>
            <person name="Csonka L.N."/>
            <person name="Woyke T."/>
        </authorList>
    </citation>
    <scope>NUCLEOTIDE SEQUENCE [LARGE SCALE GENOMIC DNA]</scope>
    <source>
        <strain>ATCC BAA-138 / DSM 3043 / CIP 106854 / NCIMB 13768 / 1H11</strain>
    </source>
</reference>
<proteinExistence type="inferred from homology"/>
<protein>
    <recommendedName>
        <fullName evidence="1">Sulfite reductase [NADPH] hemoprotein beta-component</fullName>
        <shortName evidence="1">SiR-HP</shortName>
        <shortName evidence="1">SiRHP</shortName>
        <ecNumber evidence="1">1.8.1.2</ecNumber>
    </recommendedName>
</protein>